<organism>
    <name type="scientific">Human cytomegalovirus (strain Merlin)</name>
    <name type="common">HHV-5</name>
    <name type="synonym">Human herpesvirus 5</name>
    <dbReference type="NCBI Taxonomy" id="295027"/>
    <lineage>
        <taxon>Viruses</taxon>
        <taxon>Duplodnaviria</taxon>
        <taxon>Heunggongvirae</taxon>
        <taxon>Peploviricota</taxon>
        <taxon>Herviviricetes</taxon>
        <taxon>Herpesvirales</taxon>
        <taxon>Orthoherpesviridae</taxon>
        <taxon>Betaherpesvirinae</taxon>
        <taxon>Cytomegalovirus</taxon>
        <taxon>Cytomegalovirus humanbeta5</taxon>
        <taxon>Human cytomegalovirus</taxon>
    </lineage>
</organism>
<reference key="1">
    <citation type="journal article" date="2004" name="J. Gen. Virol.">
        <title>Genetic content of wild-type human cytomegalovirus.</title>
        <authorList>
            <person name="Dolan A."/>
            <person name="Cunningham C."/>
            <person name="Hector R.D."/>
            <person name="Hassan-Walker A.F."/>
            <person name="Lee L."/>
            <person name="Addison C."/>
            <person name="Dargan D.J."/>
            <person name="McGeoch D.J."/>
            <person name="Gatherer D."/>
            <person name="Emery V.C."/>
            <person name="Griffiths P.D."/>
            <person name="Sinzger C."/>
            <person name="McSharry B.P."/>
            <person name="Wilkinson G.W.G."/>
            <person name="Davison A.J."/>
        </authorList>
    </citation>
    <scope>NUCLEOTIDE SEQUENCE [LARGE SCALE GENOMIC DNA]</scope>
</reference>
<organismHost>
    <name type="scientific">Homo sapiens</name>
    <name type="common">Human</name>
    <dbReference type="NCBI Taxonomy" id="9606"/>
</organismHost>
<proteinExistence type="inferred from homology"/>
<name>US26_HCMVM</name>
<protein>
    <recommendedName>
        <fullName>Protein US26</fullName>
    </recommendedName>
</protein>
<keyword id="KW-1185">Reference proteome</keyword>
<comment type="similarity">
    <text evidence="2">Belongs to the herpesviridae US22 family.</text>
</comment>
<evidence type="ECO:0000256" key="1">
    <source>
        <dbReference type="SAM" id="MobiDB-lite"/>
    </source>
</evidence>
<evidence type="ECO:0000305" key="2"/>
<accession>F5H991</accession>
<feature type="chain" id="PRO_0000418324" description="Protein US26">
    <location>
        <begin position="1"/>
        <end position="603"/>
    </location>
</feature>
<feature type="region of interest" description="Disordered" evidence="1">
    <location>
        <begin position="496"/>
        <end position="536"/>
    </location>
</feature>
<feature type="region of interest" description="Disordered" evidence="1">
    <location>
        <begin position="549"/>
        <end position="568"/>
    </location>
</feature>
<feature type="compositionally biased region" description="Acidic residues" evidence="1">
    <location>
        <begin position="496"/>
        <end position="513"/>
    </location>
</feature>
<feature type="compositionally biased region" description="Polar residues" evidence="1">
    <location>
        <begin position="517"/>
        <end position="533"/>
    </location>
</feature>
<gene>
    <name type="primary">US26</name>
</gene>
<sequence length="603" mass="69953">MRQSYRYASGAVVRRTLKGLRKLILCQDLRQDIRHLVRSYADMNISLPVSAPPGWRLDFVEFEDIFGSAAVTDGPETPWGQLICCEESLESLGVLQFSTTVLPRVHGPRSSSEDEDSDDDDFFVYVEEIEPPSQARLVLLLGRYETVWCLDRDCGVLYYLAHSLDDFARHGLLHCEAIYGEQMRTPLLTTQPDHIICDLRLHDNSISELQRVTCRYRGECVPLRTPGEMTRPLLLCGQAENLKGVWPFICMETEQFNDLLKFFVDRLCCETMIMGVVGESLPSGVFHADFVILVDRACEFFYFDVSRREIWRLADSVDMLLTVGLLKIYQAGRRFHYAVDDAERLEVPGRCPHENFPFWDRFGTVERVRASTRHHELRYKWLIRKDRFIVRPDWCSMRNSLDEVSGTADVSWDPRIRPDYPQTSDLECAKQYWQELNDHVREQTARYGPVRRYSVWCGMSSRLERAVKRLQQRIPRQNLMNPSLMNQGLCVYYSDEEEDQEEDDTSDDDDQEKETENPQNNIGSLTRTPSSPGSLEGVEERMLNVMKEAVAEQDRKKTQKKHKIDTAQRRVLTRRAARAAVLEGRPTPKPTMPHPVSYLPFWM</sequence>
<dbReference type="EMBL" id="AY446894">
    <property type="protein sequence ID" value="AAR31714.1"/>
    <property type="molecule type" value="Genomic_DNA"/>
</dbReference>
<dbReference type="RefSeq" id="YP_081610.1">
    <property type="nucleotide sequence ID" value="NC_006273.2"/>
</dbReference>
<dbReference type="GeneID" id="3077545"/>
<dbReference type="KEGG" id="vg:3077545"/>
<dbReference type="Reactome" id="R-HSA-9609690">
    <property type="pathway name" value="HCMV Early Events"/>
</dbReference>
<dbReference type="Proteomes" id="UP000000938">
    <property type="component" value="Segment"/>
</dbReference>
<dbReference type="InterPro" id="IPR003360">
    <property type="entry name" value="US22-like"/>
</dbReference>
<dbReference type="Pfam" id="PF02393">
    <property type="entry name" value="US22"/>
    <property type="match status" value="2"/>
</dbReference>